<reference key="1">
    <citation type="journal article" date="2011" name="Mol. Cell. Proteomics">
        <title>Molecular diversity and functional evolution of scorpion potassium channel toxins.</title>
        <authorList>
            <person name="Zhu S."/>
            <person name="Peigneur S."/>
            <person name="Gao B."/>
            <person name="Luo L."/>
            <person name="Jin D."/>
            <person name="Zhao Y."/>
            <person name="Tytgat J."/>
        </authorList>
    </citation>
    <scope>NUCLEOTIDE SEQUENCE [MRNA]</scope>
    <source>
        <tissue>Venom gland</tissue>
    </source>
</reference>
<evidence type="ECO:0000250" key="1">
    <source>
        <dbReference type="UniProtKB" id="P0DL65"/>
    </source>
</evidence>
<evidence type="ECO:0000255" key="2"/>
<evidence type="ECO:0000303" key="3">
    <source>
    </source>
</evidence>
<evidence type="ECO:0000305" key="4"/>
<evidence type="ECO:0000305" key="5">
    <source>
    </source>
</evidence>
<evidence type="ECO:0000312" key="6">
    <source>
        <dbReference type="EMBL" id="ABR21058.1"/>
    </source>
</evidence>
<protein>
    <recommendedName>
        <fullName evidence="3">Potassium channel toxin MeuTXKalpha4</fullName>
    </recommendedName>
    <alternativeName>
        <fullName evidence="4">Potassium channel toxin alpha-KTx</fullName>
    </alternativeName>
    <alternativeName>
        <fullName evidence="6">Venom antimicrobial peptide-8</fullName>
    </alternativeName>
</protein>
<feature type="signal peptide" evidence="2">
    <location>
        <begin position="1"/>
        <end position="28"/>
    </location>
</feature>
<feature type="chain" id="PRO_5003189730" description="Potassium channel toxin MeuTXKalpha4" evidence="5">
    <location>
        <begin position="29"/>
        <end position="63"/>
    </location>
</feature>
<feature type="disulfide bond" evidence="1">
    <location>
        <begin position="35"/>
        <end position="53"/>
    </location>
</feature>
<feature type="disulfide bond" evidence="1">
    <location>
        <begin position="39"/>
        <end position="59"/>
    </location>
</feature>
<feature type="disulfide bond" evidence="1">
    <location>
        <begin position="43"/>
        <end position="61"/>
    </location>
</feature>
<comment type="function">
    <text evidence="4">May block voltage-gated potassium channels (Kv).</text>
</comment>
<comment type="subcellular location">
    <subcellularLocation>
        <location evidence="5">Secreted</location>
    </subcellularLocation>
</comment>
<comment type="tissue specificity">
    <text evidence="5">Expressed by the venom gland.</text>
</comment>
<comment type="similarity">
    <text evidence="4">Belongs to the short scorpion toxin superfamily. Potassium channel inhibitor family.</text>
</comment>
<accession>E4VP41</accession>
<organism>
    <name type="scientific">Mesobuthus eupeus</name>
    <name type="common">Lesser Asian scorpion</name>
    <name type="synonym">Buthus eupeus</name>
    <dbReference type="NCBI Taxonomy" id="34648"/>
    <lineage>
        <taxon>Eukaryota</taxon>
        <taxon>Metazoa</taxon>
        <taxon>Ecdysozoa</taxon>
        <taxon>Arthropoda</taxon>
        <taxon>Chelicerata</taxon>
        <taxon>Arachnida</taxon>
        <taxon>Scorpiones</taxon>
        <taxon>Buthida</taxon>
        <taxon>Buthoidea</taxon>
        <taxon>Buthidae</taxon>
        <taxon>Mesobuthus</taxon>
    </lineage>
</organism>
<proteinExistence type="inferred from homology"/>
<name>KAXU4_MESEU</name>
<sequence length="63" mass="7104">MSRLLIFILTAVVLSVIIDILNNSKVEGQYCCYTCIPDCSKSCQDSGLRFKACIPYRSCLCQY</sequence>
<dbReference type="EMBL" id="EF445083">
    <property type="protein sequence ID" value="ABR21058.1"/>
    <property type="molecule type" value="mRNA"/>
</dbReference>
<dbReference type="GO" id="GO:0005576">
    <property type="term" value="C:extracellular region"/>
    <property type="evidence" value="ECO:0007669"/>
    <property type="project" value="UniProtKB-SubCell"/>
</dbReference>
<dbReference type="GO" id="GO:0015459">
    <property type="term" value="F:potassium channel regulator activity"/>
    <property type="evidence" value="ECO:0007669"/>
    <property type="project" value="UniProtKB-KW"/>
</dbReference>
<dbReference type="GO" id="GO:0090729">
    <property type="term" value="F:toxin activity"/>
    <property type="evidence" value="ECO:0007669"/>
    <property type="project" value="UniProtKB-KW"/>
</dbReference>
<keyword id="KW-1015">Disulfide bond</keyword>
<keyword id="KW-0872">Ion channel impairing toxin</keyword>
<keyword id="KW-0528">Neurotoxin</keyword>
<keyword id="KW-0632">Potassium channel impairing toxin</keyword>
<keyword id="KW-0964">Secreted</keyword>
<keyword id="KW-0732">Signal</keyword>
<keyword id="KW-0800">Toxin</keyword>
<keyword id="KW-1220">Voltage-gated potassium channel impairing toxin</keyword>